<accession>Q5W1J6</accession>
<organism>
    <name type="scientific">Xenopus laevis</name>
    <name type="common">African clawed frog</name>
    <dbReference type="NCBI Taxonomy" id="8355"/>
    <lineage>
        <taxon>Eukaryota</taxon>
        <taxon>Metazoa</taxon>
        <taxon>Chordata</taxon>
        <taxon>Craniata</taxon>
        <taxon>Vertebrata</taxon>
        <taxon>Euteleostomi</taxon>
        <taxon>Amphibia</taxon>
        <taxon>Batrachia</taxon>
        <taxon>Anura</taxon>
        <taxon>Pipoidea</taxon>
        <taxon>Pipidae</taxon>
        <taxon>Xenopodinae</taxon>
        <taxon>Xenopus</taxon>
        <taxon>Xenopus</taxon>
    </lineage>
</organism>
<proteinExistence type="evidence at transcript level"/>
<keyword id="KW-0010">Activator</keyword>
<keyword id="KW-0131">Cell cycle</keyword>
<keyword id="KW-0227">DNA damage</keyword>
<keyword id="KW-0234">DNA repair</keyword>
<keyword id="KW-0238">DNA-binding</keyword>
<keyword id="KW-0539">Nucleus</keyword>
<keyword id="KW-1185">Reference proteome</keyword>
<keyword id="KW-0804">Transcription</keyword>
<keyword id="KW-0805">Transcription regulation</keyword>
<evidence type="ECO:0000250" key="1">
    <source>
        <dbReference type="UniProtKB" id="Q08050"/>
    </source>
</evidence>
<evidence type="ECO:0000255" key="2">
    <source>
        <dbReference type="PROSITE-ProRule" id="PRU00089"/>
    </source>
</evidence>
<evidence type="ECO:0000256" key="3">
    <source>
        <dbReference type="SAM" id="MobiDB-lite"/>
    </source>
</evidence>
<evidence type="ECO:0000269" key="4">
    <source>
    </source>
</evidence>
<evidence type="ECO:0000305" key="5"/>
<evidence type="ECO:0000312" key="6">
    <source>
        <dbReference type="EMBL" id="CAH68560.1"/>
    </source>
</evidence>
<comment type="function">
    <text evidence="1">Transcription factor regulating the expression of cell cycle genes essential for DNA replication and mitosis. Plays a role in the control of cell proliferation. Also plays a role in DNA break repair, participating in the DNA damage checkpoint response. Promotes transcription of PHB2.</text>
</comment>
<comment type="subcellular location">
    <subcellularLocation>
        <location evidence="5">Nucleus</location>
    </subcellularLocation>
</comment>
<comment type="tissue specificity">
    <text evidence="4">Localized to the animal hemisphere of early cleavage stage embryos. During neurulation, expressed in the neural folds. Later, expressed in the spinal cord and in the eye field. During tailbud stages, expression is still restricted to the neuroectoderm, predominantly to the hindbrain, the eye and the spinal cord. With ongoing development, expression is also found at lower levels in the branchial arches. At stage 35, expressed in the rhombencephalon and in the eye retina.</text>
</comment>
<comment type="developmental stage">
    <text evidence="4">Expressed both maternally and zygotically. Maternal levels decrease rapidly until the blastula stage. Absent from gastrula stage embryos and then zygotic expression starts during neurulation and persists until the end of organogenesis.</text>
</comment>
<reference evidence="5 6" key="1">
    <citation type="journal article" date="2005" name="Int. J. Dev. Biol.">
        <title>The Fox gene family in Xenopus laevis: FoxI2, FoxM1 and FoxP1 in early development.</title>
        <authorList>
            <person name="Pohl B.S."/>
            <person name="Roessner A."/>
            <person name="Knoechel W."/>
        </authorList>
    </citation>
    <scope>NUCLEOTIDE SEQUENCE [MRNA]</scope>
    <scope>TISSUE SPECIFICITY</scope>
    <scope>DEVELOPMENTAL STAGE</scope>
    <source>
        <tissue evidence="4">Embryo</tissue>
    </source>
</reference>
<name>FOXM1_XENLA</name>
<protein>
    <recommendedName>
        <fullName>Forkhead box protein M1</fullName>
    </recommendedName>
    <alternativeName>
        <fullName>XlFoxM1</fullName>
    </alternativeName>
</protein>
<feature type="chain" id="PRO_0000247731" description="Forkhead box protein M1">
    <location>
        <begin position="1"/>
        <end position="759"/>
    </location>
</feature>
<feature type="DNA-binding region" description="Fork-head" evidence="2">
    <location>
        <begin position="260"/>
        <end position="358"/>
    </location>
</feature>
<feature type="region of interest" description="Disordered" evidence="3">
    <location>
        <begin position="1"/>
        <end position="92"/>
    </location>
</feature>
<feature type="region of interest" description="Disordered" evidence="3">
    <location>
        <begin position="420"/>
        <end position="450"/>
    </location>
</feature>
<feature type="region of interest" description="Disordered" evidence="3">
    <location>
        <begin position="516"/>
        <end position="535"/>
    </location>
</feature>
<feature type="region of interest" description="Disordered" evidence="3">
    <location>
        <begin position="596"/>
        <end position="631"/>
    </location>
</feature>
<feature type="compositionally biased region" description="Basic and acidic residues" evidence="3">
    <location>
        <begin position="48"/>
        <end position="63"/>
    </location>
</feature>
<feature type="compositionally biased region" description="Low complexity" evidence="3">
    <location>
        <begin position="601"/>
        <end position="612"/>
    </location>
</feature>
<gene>
    <name evidence="6" type="primary">foxm1</name>
</gene>
<sequence>MRTSPRRPLILKRRKLSLPHQDATPCPGASEQGKAAMMKTANLPEQTLAHELEDMAPKSKADQETPGQNEGGDTLGQSLAPTMRLPSNPPQSCPEDIPGFPSGVRIMGHPTMADAQLVIIPSQSNVQSIIQALTARGKEQGGPNKYIIISSESAIQTQAWHQGPQIKEEECVNSQSEATCISKQKPTGNSRKAKHRQEEQLNASLSNIQWLGNMSSESLGQYSIKEEQEDKENQIPECAKMEEEPQSFPDPQWPLSVTERPPYSYMALIQFAINSTPRKRMTLKDIYTWIEDHFPYFKHVAKPGWKNSIRHNLSLHDMFVRESEANNKVSYWTIHPQANRCLTLDQVFKTASPMSPADNEPQKKMIPDIRKSFQSAACASNKERKMKPLLPRVNSYLIPVHFPVAQPVLLPALEPYAFGAESSDGQQSSKRVKIAPKATADDGESPKHLGLCSVKEEPDISNLKCEDLFQCKRVSSSRRKQQLLPPHSEEPELVLPESIASDSGLDTDFSFIQDASANPNQNLTSHPTQNCPSNVTQEGLLHLTHDGPSYLTQVSSSHFTQDDPCQFTKDDTFYFTQDNPIQLTQDEDYTFKTPIKEHFSKPTTSSTPSKPTDTGLLQPWESETSLPRDPVLDFSPVRIPQGSTFTPFKDNLGTLSFGDTPFKDFGIFGSPQNLLNALSPASSPLLRLESPCVSRQQKRCSKELQVGASANRSLLEGLVLDTVDDSLSKILLDISFSGMEEGNGLEVDGVWSQFLPEFK</sequence>
<dbReference type="EMBL" id="AJ853462">
    <property type="protein sequence ID" value="CAH68560.1"/>
    <property type="molecule type" value="mRNA"/>
</dbReference>
<dbReference type="SMR" id="Q5W1J6"/>
<dbReference type="KEGG" id="xla:496385"/>
<dbReference type="AGR" id="Xenbase:XB-GENE-854084"/>
<dbReference type="CTD" id="496385"/>
<dbReference type="Xenbase" id="XB-GENE-854084">
    <property type="gene designation" value="foxm1.S"/>
</dbReference>
<dbReference type="OrthoDB" id="5954824at2759"/>
<dbReference type="Proteomes" id="UP000186698">
    <property type="component" value="Chromosome 3S"/>
</dbReference>
<dbReference type="Bgee" id="496385">
    <property type="expression patterns" value="Expressed in blastula and 17 other cell types or tissues"/>
</dbReference>
<dbReference type="GO" id="GO:0005634">
    <property type="term" value="C:nucleus"/>
    <property type="evidence" value="ECO:0000250"/>
    <property type="project" value="UniProtKB"/>
</dbReference>
<dbReference type="GO" id="GO:0003700">
    <property type="term" value="F:DNA-binding transcription factor activity"/>
    <property type="evidence" value="ECO:0000250"/>
    <property type="project" value="UniProtKB"/>
</dbReference>
<dbReference type="GO" id="GO:0000977">
    <property type="term" value="F:RNA polymerase II transcription regulatory region sequence-specific DNA binding"/>
    <property type="evidence" value="ECO:0000318"/>
    <property type="project" value="GO_Central"/>
</dbReference>
<dbReference type="GO" id="GO:0006281">
    <property type="term" value="P:DNA repair"/>
    <property type="evidence" value="ECO:0007669"/>
    <property type="project" value="UniProtKB-KW"/>
</dbReference>
<dbReference type="GO" id="GO:0000086">
    <property type="term" value="P:G2/M transition of mitotic cell cycle"/>
    <property type="evidence" value="ECO:0007669"/>
    <property type="project" value="InterPro"/>
</dbReference>
<dbReference type="GO" id="GO:0042127">
    <property type="term" value="P:regulation of cell population proliferation"/>
    <property type="evidence" value="ECO:0000318"/>
    <property type="project" value="GO_Central"/>
</dbReference>
<dbReference type="GO" id="GO:0006357">
    <property type="term" value="P:regulation of transcription by RNA polymerase II"/>
    <property type="evidence" value="ECO:0000318"/>
    <property type="project" value="GO_Central"/>
</dbReference>
<dbReference type="CDD" id="cd20029">
    <property type="entry name" value="FH_FOXM"/>
    <property type="match status" value="1"/>
</dbReference>
<dbReference type="FunFam" id="1.10.10.10:FF:000245">
    <property type="entry name" value="forkhead box protein M1 isoform X2"/>
    <property type="match status" value="1"/>
</dbReference>
<dbReference type="Gene3D" id="1.10.10.10">
    <property type="entry name" value="Winged helix-like DNA-binding domain superfamily/Winged helix DNA-binding domain"/>
    <property type="match status" value="1"/>
</dbReference>
<dbReference type="InterPro" id="IPR047516">
    <property type="entry name" value="FH_FOXM1"/>
</dbReference>
<dbReference type="InterPro" id="IPR001766">
    <property type="entry name" value="Fork_head_dom"/>
</dbReference>
<dbReference type="InterPro" id="IPR042839">
    <property type="entry name" value="FOXM1"/>
</dbReference>
<dbReference type="InterPro" id="IPR018122">
    <property type="entry name" value="TF_fork_head_CS_1"/>
</dbReference>
<dbReference type="InterPro" id="IPR030456">
    <property type="entry name" value="TF_fork_head_CS_2"/>
</dbReference>
<dbReference type="InterPro" id="IPR036388">
    <property type="entry name" value="WH-like_DNA-bd_sf"/>
</dbReference>
<dbReference type="InterPro" id="IPR036390">
    <property type="entry name" value="WH_DNA-bd_sf"/>
</dbReference>
<dbReference type="PANTHER" id="PTHR46878">
    <property type="entry name" value="FORKHEAD BOX PROTEIN M1"/>
    <property type="match status" value="1"/>
</dbReference>
<dbReference type="PANTHER" id="PTHR46878:SF1">
    <property type="entry name" value="FORKHEAD BOX PROTEIN M1"/>
    <property type="match status" value="1"/>
</dbReference>
<dbReference type="Pfam" id="PF00250">
    <property type="entry name" value="Forkhead"/>
    <property type="match status" value="1"/>
</dbReference>
<dbReference type="PRINTS" id="PR00053">
    <property type="entry name" value="FORKHEAD"/>
</dbReference>
<dbReference type="SMART" id="SM00339">
    <property type="entry name" value="FH"/>
    <property type="match status" value="1"/>
</dbReference>
<dbReference type="SUPFAM" id="SSF46785">
    <property type="entry name" value="Winged helix' DNA-binding domain"/>
    <property type="match status" value="1"/>
</dbReference>
<dbReference type="PROSITE" id="PS00657">
    <property type="entry name" value="FORK_HEAD_1"/>
    <property type="match status" value="1"/>
</dbReference>
<dbReference type="PROSITE" id="PS00658">
    <property type="entry name" value="FORK_HEAD_2"/>
    <property type="match status" value="1"/>
</dbReference>
<dbReference type="PROSITE" id="PS50039">
    <property type="entry name" value="FORK_HEAD_3"/>
    <property type="match status" value="1"/>
</dbReference>